<geneLocation type="mitochondrion"/>
<name>CYB_NEOSS</name>
<keyword id="KW-0249">Electron transport</keyword>
<keyword id="KW-0349">Heme</keyword>
<keyword id="KW-0408">Iron</keyword>
<keyword id="KW-0472">Membrane</keyword>
<keyword id="KW-0479">Metal-binding</keyword>
<keyword id="KW-0496">Mitochondrion</keyword>
<keyword id="KW-0999">Mitochondrion inner membrane</keyword>
<keyword id="KW-0679">Respiratory chain</keyword>
<keyword id="KW-0812">Transmembrane</keyword>
<keyword id="KW-1133">Transmembrane helix</keyword>
<keyword id="KW-0813">Transport</keyword>
<keyword id="KW-0830">Ubiquinone</keyword>
<sequence length="379" mass="43126">MTNIRKTHPLIKIINHSFIDLPAPSNISAWWNFGSLLGICLIIQILTGLFLAMHYTSDTMTAFSSVTHICRDVNYGWLIRYMHANGASMFFICLFLHVGRGLYYGSYTYFETWNIGVILLFAVMATAFMGYVLPWGQMSFWGATVITNLLSAIPYIGTTLVEWIWGGFSVDKATLTRFFAFHFILPFIITALVMVHLLFLHETGSNNPSGLISDSDKIPFHPYYTIKDILGVLLLILILMILVLFSPDLLGDPDNYTPANPLNTPPHIKPEWYFLFAYAILRSIPNKLGGVLALVLSILILMLFPILHMSKQRSMMFRPLSQCMFWILVADLFTLTWIGGQPVEYPFIIIGQLASILYFMIILLILPTISLFENKLLKW</sequence>
<reference key="1">
    <citation type="journal article" date="2001" name="Mol. Phylogenet. Evol.">
        <title>Molecular phylogeny of the chipmunks inferred from mitochondrial cytochrome b and cytochrome oxidase II gene sequences.</title>
        <authorList>
            <person name="Piaggio A.J."/>
            <person name="Spicer G.S."/>
        </authorList>
    </citation>
    <scope>NUCLEOTIDE SEQUENCE [GENOMIC DNA]</scope>
</reference>
<organism>
    <name type="scientific">Neotamias siskiyou</name>
    <name type="common">Siskiyou chipmunk</name>
    <name type="synonym">Tamias siskiyou</name>
    <dbReference type="NCBI Taxonomy" id="3370383"/>
    <lineage>
        <taxon>Eukaryota</taxon>
        <taxon>Metazoa</taxon>
        <taxon>Chordata</taxon>
        <taxon>Craniata</taxon>
        <taxon>Vertebrata</taxon>
        <taxon>Euteleostomi</taxon>
        <taxon>Mammalia</taxon>
        <taxon>Eutheria</taxon>
        <taxon>Euarchontoglires</taxon>
        <taxon>Glires</taxon>
        <taxon>Rodentia</taxon>
        <taxon>Sciuromorpha</taxon>
        <taxon>Sciuridae</taxon>
        <taxon>Xerinae</taxon>
        <taxon>Marmotini</taxon>
        <taxon>Neotamias</taxon>
    </lineage>
</organism>
<proteinExistence type="inferred from homology"/>
<gene>
    <name type="primary">MT-CYB</name>
    <name type="synonym">COB</name>
    <name type="synonym">CYTB</name>
    <name type="synonym">MTCYB</name>
</gene>
<feature type="chain" id="PRO_0000257951" description="Cytochrome b">
    <location>
        <begin position="1"/>
        <end position="379"/>
    </location>
</feature>
<feature type="transmembrane region" description="Helical" evidence="2">
    <location>
        <begin position="33"/>
        <end position="53"/>
    </location>
</feature>
<feature type="transmembrane region" description="Helical" evidence="2">
    <location>
        <begin position="77"/>
        <end position="98"/>
    </location>
</feature>
<feature type="transmembrane region" description="Helical" evidence="2">
    <location>
        <begin position="113"/>
        <end position="133"/>
    </location>
</feature>
<feature type="transmembrane region" description="Helical" evidence="2">
    <location>
        <begin position="178"/>
        <end position="198"/>
    </location>
</feature>
<feature type="transmembrane region" description="Helical" evidence="2">
    <location>
        <begin position="226"/>
        <end position="246"/>
    </location>
</feature>
<feature type="transmembrane region" description="Helical" evidence="2">
    <location>
        <begin position="288"/>
        <end position="308"/>
    </location>
</feature>
<feature type="transmembrane region" description="Helical" evidence="2">
    <location>
        <begin position="320"/>
        <end position="340"/>
    </location>
</feature>
<feature type="transmembrane region" description="Helical" evidence="2">
    <location>
        <begin position="347"/>
        <end position="367"/>
    </location>
</feature>
<feature type="binding site" description="axial binding residue" evidence="2">
    <location>
        <position position="83"/>
    </location>
    <ligand>
        <name>heme b</name>
        <dbReference type="ChEBI" id="CHEBI:60344"/>
        <label>b562</label>
    </ligand>
    <ligandPart>
        <name>Fe</name>
        <dbReference type="ChEBI" id="CHEBI:18248"/>
    </ligandPart>
</feature>
<feature type="binding site" description="axial binding residue" evidence="2">
    <location>
        <position position="97"/>
    </location>
    <ligand>
        <name>heme b</name>
        <dbReference type="ChEBI" id="CHEBI:60344"/>
        <label>b566</label>
    </ligand>
    <ligandPart>
        <name>Fe</name>
        <dbReference type="ChEBI" id="CHEBI:18248"/>
    </ligandPart>
</feature>
<feature type="binding site" description="axial binding residue" evidence="2">
    <location>
        <position position="182"/>
    </location>
    <ligand>
        <name>heme b</name>
        <dbReference type="ChEBI" id="CHEBI:60344"/>
        <label>b562</label>
    </ligand>
    <ligandPart>
        <name>Fe</name>
        <dbReference type="ChEBI" id="CHEBI:18248"/>
    </ligandPart>
</feature>
<feature type="binding site" description="axial binding residue" evidence="2">
    <location>
        <position position="196"/>
    </location>
    <ligand>
        <name>heme b</name>
        <dbReference type="ChEBI" id="CHEBI:60344"/>
        <label>b566</label>
    </ligand>
    <ligandPart>
        <name>Fe</name>
        <dbReference type="ChEBI" id="CHEBI:18248"/>
    </ligandPart>
</feature>
<feature type="binding site" evidence="2">
    <location>
        <position position="201"/>
    </location>
    <ligand>
        <name>a ubiquinone</name>
        <dbReference type="ChEBI" id="CHEBI:16389"/>
    </ligand>
</feature>
<comment type="function">
    <text evidence="2">Component of the ubiquinol-cytochrome c reductase complex (complex III or cytochrome b-c1 complex) that is part of the mitochondrial respiratory chain. The b-c1 complex mediates electron transfer from ubiquinol to cytochrome c. Contributes to the generation of a proton gradient across the mitochondrial membrane that is then used for ATP synthesis.</text>
</comment>
<comment type="cofactor">
    <cofactor evidence="2">
        <name>heme b</name>
        <dbReference type="ChEBI" id="CHEBI:60344"/>
    </cofactor>
    <text evidence="2">Binds 2 heme b groups non-covalently.</text>
</comment>
<comment type="subunit">
    <text evidence="2">The cytochrome bc1 complex contains 11 subunits: 3 respiratory subunits (MT-CYB, CYC1 and UQCRFS1), 2 core proteins (UQCRC1 and UQCRC2) and 6 low-molecular weight proteins (UQCRH/QCR6, UQCRB/QCR7, UQCRQ/QCR8, UQCR10/QCR9, UQCR11/QCR10 and a cleavage product of UQCRFS1). This cytochrome bc1 complex then forms a dimer.</text>
</comment>
<comment type="subcellular location">
    <subcellularLocation>
        <location evidence="2">Mitochondrion inner membrane</location>
        <topology evidence="2">Multi-pass membrane protein</topology>
    </subcellularLocation>
</comment>
<comment type="miscellaneous">
    <text evidence="1">Heme 1 (or BL or b562) is low-potential and absorbs at about 562 nm, and heme 2 (or BH or b566) is high-potential and absorbs at about 566 nm.</text>
</comment>
<comment type="similarity">
    <text evidence="3 4">Belongs to the cytochrome b family.</text>
</comment>
<comment type="caution">
    <text evidence="2">The full-length protein contains only eight transmembrane helices, not nine as predicted by bioinformatics tools.</text>
</comment>
<dbReference type="EMBL" id="AF147668">
    <property type="protein sequence ID" value="AAL14067.1"/>
    <property type="molecule type" value="Genomic_DNA"/>
</dbReference>
<dbReference type="SMR" id="Q94Y46"/>
<dbReference type="GO" id="GO:0005743">
    <property type="term" value="C:mitochondrial inner membrane"/>
    <property type="evidence" value="ECO:0007669"/>
    <property type="project" value="UniProtKB-SubCell"/>
</dbReference>
<dbReference type="GO" id="GO:0045275">
    <property type="term" value="C:respiratory chain complex III"/>
    <property type="evidence" value="ECO:0007669"/>
    <property type="project" value="InterPro"/>
</dbReference>
<dbReference type="GO" id="GO:0046872">
    <property type="term" value="F:metal ion binding"/>
    <property type="evidence" value="ECO:0007669"/>
    <property type="project" value="UniProtKB-KW"/>
</dbReference>
<dbReference type="GO" id="GO:0008121">
    <property type="term" value="F:ubiquinol-cytochrome-c reductase activity"/>
    <property type="evidence" value="ECO:0007669"/>
    <property type="project" value="InterPro"/>
</dbReference>
<dbReference type="GO" id="GO:0006122">
    <property type="term" value="P:mitochondrial electron transport, ubiquinol to cytochrome c"/>
    <property type="evidence" value="ECO:0007669"/>
    <property type="project" value="TreeGrafter"/>
</dbReference>
<dbReference type="CDD" id="cd00290">
    <property type="entry name" value="cytochrome_b_C"/>
    <property type="match status" value="1"/>
</dbReference>
<dbReference type="CDD" id="cd00284">
    <property type="entry name" value="Cytochrome_b_N"/>
    <property type="match status" value="1"/>
</dbReference>
<dbReference type="FunFam" id="1.20.810.10:FF:000002">
    <property type="entry name" value="Cytochrome b"/>
    <property type="match status" value="1"/>
</dbReference>
<dbReference type="Gene3D" id="1.20.810.10">
    <property type="entry name" value="Cytochrome Bc1 Complex, Chain C"/>
    <property type="match status" value="1"/>
</dbReference>
<dbReference type="InterPro" id="IPR005798">
    <property type="entry name" value="Cyt_b/b6_C"/>
</dbReference>
<dbReference type="InterPro" id="IPR036150">
    <property type="entry name" value="Cyt_b/b6_C_sf"/>
</dbReference>
<dbReference type="InterPro" id="IPR005797">
    <property type="entry name" value="Cyt_b/b6_N"/>
</dbReference>
<dbReference type="InterPro" id="IPR027387">
    <property type="entry name" value="Cytb/b6-like_sf"/>
</dbReference>
<dbReference type="InterPro" id="IPR030689">
    <property type="entry name" value="Cytochrome_b"/>
</dbReference>
<dbReference type="InterPro" id="IPR048260">
    <property type="entry name" value="Cytochrome_b_C_euk/bac"/>
</dbReference>
<dbReference type="InterPro" id="IPR048259">
    <property type="entry name" value="Cytochrome_b_N_euk/bac"/>
</dbReference>
<dbReference type="InterPro" id="IPR016174">
    <property type="entry name" value="Di-haem_cyt_TM"/>
</dbReference>
<dbReference type="PANTHER" id="PTHR19271">
    <property type="entry name" value="CYTOCHROME B"/>
    <property type="match status" value="1"/>
</dbReference>
<dbReference type="PANTHER" id="PTHR19271:SF16">
    <property type="entry name" value="CYTOCHROME B"/>
    <property type="match status" value="1"/>
</dbReference>
<dbReference type="Pfam" id="PF00032">
    <property type="entry name" value="Cytochrom_B_C"/>
    <property type="match status" value="1"/>
</dbReference>
<dbReference type="Pfam" id="PF00033">
    <property type="entry name" value="Cytochrome_B"/>
    <property type="match status" value="1"/>
</dbReference>
<dbReference type="PIRSF" id="PIRSF038885">
    <property type="entry name" value="COB"/>
    <property type="match status" value="1"/>
</dbReference>
<dbReference type="SUPFAM" id="SSF81648">
    <property type="entry name" value="a domain/subunit of cytochrome bc1 complex (Ubiquinol-cytochrome c reductase)"/>
    <property type="match status" value="1"/>
</dbReference>
<dbReference type="SUPFAM" id="SSF81342">
    <property type="entry name" value="Transmembrane di-heme cytochromes"/>
    <property type="match status" value="1"/>
</dbReference>
<dbReference type="PROSITE" id="PS51003">
    <property type="entry name" value="CYTB_CTER"/>
    <property type="match status" value="1"/>
</dbReference>
<dbReference type="PROSITE" id="PS51002">
    <property type="entry name" value="CYTB_NTER"/>
    <property type="match status" value="1"/>
</dbReference>
<evidence type="ECO:0000250" key="1"/>
<evidence type="ECO:0000250" key="2">
    <source>
        <dbReference type="UniProtKB" id="P00157"/>
    </source>
</evidence>
<evidence type="ECO:0000255" key="3">
    <source>
        <dbReference type="PROSITE-ProRule" id="PRU00967"/>
    </source>
</evidence>
<evidence type="ECO:0000255" key="4">
    <source>
        <dbReference type="PROSITE-ProRule" id="PRU00968"/>
    </source>
</evidence>
<protein>
    <recommendedName>
        <fullName>Cytochrome b</fullName>
    </recommendedName>
    <alternativeName>
        <fullName>Complex III subunit 3</fullName>
    </alternativeName>
    <alternativeName>
        <fullName>Complex III subunit III</fullName>
    </alternativeName>
    <alternativeName>
        <fullName>Cytochrome b-c1 complex subunit 3</fullName>
    </alternativeName>
    <alternativeName>
        <fullName>Ubiquinol-cytochrome-c reductase complex cytochrome b subunit</fullName>
    </alternativeName>
</protein>
<accession>Q94Y46</accession>